<dbReference type="EMBL" id="CP000381">
    <property type="protein sequence ID" value="ABX74134.1"/>
    <property type="molecule type" value="Genomic_DNA"/>
</dbReference>
<dbReference type="RefSeq" id="WP_002218431.1">
    <property type="nucleotide sequence ID" value="NC_010120.1"/>
</dbReference>
<dbReference type="SMR" id="A9M3X2"/>
<dbReference type="GeneID" id="94582015"/>
<dbReference type="KEGG" id="nmn:NMCC_2011"/>
<dbReference type="HOGENOM" id="CLU_104295_1_2_4"/>
<dbReference type="Proteomes" id="UP000001177">
    <property type="component" value="Chromosome"/>
</dbReference>
<dbReference type="GO" id="GO:0015935">
    <property type="term" value="C:small ribosomal subunit"/>
    <property type="evidence" value="ECO:0007669"/>
    <property type="project" value="InterPro"/>
</dbReference>
<dbReference type="GO" id="GO:0019843">
    <property type="term" value="F:rRNA binding"/>
    <property type="evidence" value="ECO:0007669"/>
    <property type="project" value="UniProtKB-UniRule"/>
</dbReference>
<dbReference type="GO" id="GO:0003735">
    <property type="term" value="F:structural constituent of ribosome"/>
    <property type="evidence" value="ECO:0007669"/>
    <property type="project" value="InterPro"/>
</dbReference>
<dbReference type="GO" id="GO:0000049">
    <property type="term" value="F:tRNA binding"/>
    <property type="evidence" value="ECO:0007669"/>
    <property type="project" value="UniProtKB-UniRule"/>
</dbReference>
<dbReference type="GO" id="GO:0006412">
    <property type="term" value="P:translation"/>
    <property type="evidence" value="ECO:0007669"/>
    <property type="project" value="UniProtKB-UniRule"/>
</dbReference>
<dbReference type="CDD" id="cd03368">
    <property type="entry name" value="Ribosomal_S12"/>
    <property type="match status" value="1"/>
</dbReference>
<dbReference type="FunFam" id="2.40.50.140:FF:000001">
    <property type="entry name" value="30S ribosomal protein S12"/>
    <property type="match status" value="1"/>
</dbReference>
<dbReference type="Gene3D" id="2.40.50.140">
    <property type="entry name" value="Nucleic acid-binding proteins"/>
    <property type="match status" value="1"/>
</dbReference>
<dbReference type="HAMAP" id="MF_00403_B">
    <property type="entry name" value="Ribosomal_uS12_B"/>
    <property type="match status" value="1"/>
</dbReference>
<dbReference type="InterPro" id="IPR012340">
    <property type="entry name" value="NA-bd_OB-fold"/>
</dbReference>
<dbReference type="InterPro" id="IPR006032">
    <property type="entry name" value="Ribosomal_uS12"/>
</dbReference>
<dbReference type="InterPro" id="IPR005679">
    <property type="entry name" value="Ribosomal_uS12_bac"/>
</dbReference>
<dbReference type="NCBIfam" id="TIGR00981">
    <property type="entry name" value="rpsL_bact"/>
    <property type="match status" value="1"/>
</dbReference>
<dbReference type="PANTHER" id="PTHR11652">
    <property type="entry name" value="30S RIBOSOMAL PROTEIN S12 FAMILY MEMBER"/>
    <property type="match status" value="1"/>
</dbReference>
<dbReference type="Pfam" id="PF00164">
    <property type="entry name" value="Ribosom_S12_S23"/>
    <property type="match status" value="1"/>
</dbReference>
<dbReference type="PIRSF" id="PIRSF002133">
    <property type="entry name" value="Ribosomal_S12/S23"/>
    <property type="match status" value="1"/>
</dbReference>
<dbReference type="PRINTS" id="PR01034">
    <property type="entry name" value="RIBOSOMALS12"/>
</dbReference>
<dbReference type="SUPFAM" id="SSF50249">
    <property type="entry name" value="Nucleic acid-binding proteins"/>
    <property type="match status" value="1"/>
</dbReference>
<dbReference type="PROSITE" id="PS00055">
    <property type="entry name" value="RIBOSOMAL_S12"/>
    <property type="match status" value="1"/>
</dbReference>
<feature type="chain" id="PRO_1000080404" description="Small ribosomal subunit protein uS12">
    <location>
        <begin position="1"/>
        <end position="123"/>
    </location>
</feature>
<feature type="region of interest" description="Disordered" evidence="3">
    <location>
        <begin position="104"/>
        <end position="123"/>
    </location>
</feature>
<feature type="compositionally biased region" description="Basic residues" evidence="3">
    <location>
        <begin position="113"/>
        <end position="123"/>
    </location>
</feature>
<feature type="modified residue" description="3-methylthioaspartic acid" evidence="1">
    <location>
        <position position="89"/>
    </location>
</feature>
<accession>A9M3X2</accession>
<evidence type="ECO:0000250" key="1"/>
<evidence type="ECO:0000255" key="2">
    <source>
        <dbReference type="HAMAP-Rule" id="MF_00403"/>
    </source>
</evidence>
<evidence type="ECO:0000256" key="3">
    <source>
        <dbReference type="SAM" id="MobiDB-lite"/>
    </source>
</evidence>
<evidence type="ECO:0000305" key="4"/>
<organism>
    <name type="scientific">Neisseria meningitidis serogroup C (strain 053442)</name>
    <dbReference type="NCBI Taxonomy" id="374833"/>
    <lineage>
        <taxon>Bacteria</taxon>
        <taxon>Pseudomonadati</taxon>
        <taxon>Pseudomonadota</taxon>
        <taxon>Betaproteobacteria</taxon>
        <taxon>Neisseriales</taxon>
        <taxon>Neisseriaceae</taxon>
        <taxon>Neisseria</taxon>
    </lineage>
</organism>
<gene>
    <name evidence="2" type="primary">rpsL</name>
    <name type="ordered locus">NMCC_2011</name>
</gene>
<sequence>MPTINQLVRKGRQKPVYVNKVPALEACPQKRGVCTRVYTTTPKKPNSALRKVCKVRLTNGFEVISYIGGEGHNLQEHSVVLIRGGRVKDLPGVRYHTVRGSLDTAGVKDRKQARSKYGAKRPK</sequence>
<comment type="function">
    <text evidence="2">With S4 and S5 plays an important role in translational accuracy.</text>
</comment>
<comment type="function">
    <text evidence="2">Interacts with and stabilizes bases of the 16S rRNA that are involved in tRNA selection in the A site and with the mRNA backbone. Located at the interface of the 30S and 50S subunits, it traverses the body of the 30S subunit contacting proteins on the other side and probably holding the rRNA structure together. The combined cluster of proteins S8, S12 and S17 appears to hold together the shoulder and platform of the 30S subunit.</text>
</comment>
<comment type="subunit">
    <text evidence="2">Part of the 30S ribosomal subunit. Contacts proteins S8 and S17. May interact with IF1 in the 30S initiation complex.</text>
</comment>
<comment type="similarity">
    <text evidence="2">Belongs to the universal ribosomal protein uS12 family.</text>
</comment>
<proteinExistence type="inferred from homology"/>
<keyword id="KW-0488">Methylation</keyword>
<keyword id="KW-0687">Ribonucleoprotein</keyword>
<keyword id="KW-0689">Ribosomal protein</keyword>
<keyword id="KW-0694">RNA-binding</keyword>
<keyword id="KW-0699">rRNA-binding</keyword>
<keyword id="KW-0820">tRNA-binding</keyword>
<protein>
    <recommendedName>
        <fullName evidence="2">Small ribosomal subunit protein uS12</fullName>
    </recommendedName>
    <alternativeName>
        <fullName evidence="4">30S ribosomal protein S12</fullName>
    </alternativeName>
</protein>
<name>RS12_NEIM0</name>
<reference key="1">
    <citation type="journal article" date="2008" name="Genomics">
        <title>Characterization of ST-4821 complex, a unique Neisseria meningitidis clone.</title>
        <authorList>
            <person name="Peng J."/>
            <person name="Yang L."/>
            <person name="Yang F."/>
            <person name="Yang J."/>
            <person name="Yan Y."/>
            <person name="Nie H."/>
            <person name="Zhang X."/>
            <person name="Xiong Z."/>
            <person name="Jiang Y."/>
            <person name="Cheng F."/>
            <person name="Xu X."/>
            <person name="Chen S."/>
            <person name="Sun L."/>
            <person name="Li W."/>
            <person name="Shen Y."/>
            <person name="Shao Z."/>
            <person name="Liang X."/>
            <person name="Xu J."/>
            <person name="Jin Q."/>
        </authorList>
    </citation>
    <scope>NUCLEOTIDE SEQUENCE [LARGE SCALE GENOMIC DNA]</scope>
    <source>
        <strain>053442</strain>
    </source>
</reference>